<keyword id="KW-1185">Reference proteome</keyword>
<keyword id="KW-0687">Ribonucleoprotein</keyword>
<keyword id="KW-0689">Ribosomal protein</keyword>
<protein>
    <recommendedName>
        <fullName evidence="1">Large ribosomal subunit protein bL34</fullName>
    </recommendedName>
    <alternativeName>
        <fullName evidence="2">50S ribosomal protein L34</fullName>
    </alternativeName>
</protein>
<accession>A1AV47</accession>
<sequence>MKRTFQPSNTSRKRTHGFLVRMATKNGRLVIKRRRAKGRKNLAVRIATK</sequence>
<organism>
    <name type="scientific">Pelobacter propionicus (strain DSM 2379 / NBRC 103807 / OttBd1)</name>
    <dbReference type="NCBI Taxonomy" id="338966"/>
    <lineage>
        <taxon>Bacteria</taxon>
        <taxon>Pseudomonadati</taxon>
        <taxon>Thermodesulfobacteriota</taxon>
        <taxon>Desulfuromonadia</taxon>
        <taxon>Desulfuromonadales</taxon>
        <taxon>Desulfuromonadaceae</taxon>
        <taxon>Pelobacter</taxon>
    </lineage>
</organism>
<proteinExistence type="inferred from homology"/>
<evidence type="ECO:0000255" key="1">
    <source>
        <dbReference type="HAMAP-Rule" id="MF_00391"/>
    </source>
</evidence>
<evidence type="ECO:0000305" key="2"/>
<name>RL34_PELPD</name>
<feature type="chain" id="PRO_1000013395" description="Large ribosomal subunit protein bL34">
    <location>
        <begin position="1"/>
        <end position="49"/>
    </location>
</feature>
<dbReference type="EMBL" id="CP000482">
    <property type="protein sequence ID" value="ABL01218.1"/>
    <property type="molecule type" value="Genomic_DNA"/>
</dbReference>
<dbReference type="RefSeq" id="WP_011737430.1">
    <property type="nucleotide sequence ID" value="NC_008609.1"/>
</dbReference>
<dbReference type="SMR" id="A1AV47"/>
<dbReference type="STRING" id="338966.Ppro_3626"/>
<dbReference type="KEGG" id="ppd:Ppro_3626"/>
<dbReference type="eggNOG" id="COG0230">
    <property type="taxonomic scope" value="Bacteria"/>
</dbReference>
<dbReference type="HOGENOM" id="CLU_129938_2_0_7"/>
<dbReference type="OrthoDB" id="9804164at2"/>
<dbReference type="Proteomes" id="UP000006732">
    <property type="component" value="Chromosome"/>
</dbReference>
<dbReference type="GO" id="GO:1990904">
    <property type="term" value="C:ribonucleoprotein complex"/>
    <property type="evidence" value="ECO:0007669"/>
    <property type="project" value="UniProtKB-KW"/>
</dbReference>
<dbReference type="GO" id="GO:0005840">
    <property type="term" value="C:ribosome"/>
    <property type="evidence" value="ECO:0007669"/>
    <property type="project" value="UniProtKB-KW"/>
</dbReference>
<dbReference type="GO" id="GO:0003735">
    <property type="term" value="F:structural constituent of ribosome"/>
    <property type="evidence" value="ECO:0007669"/>
    <property type="project" value="InterPro"/>
</dbReference>
<dbReference type="GO" id="GO:0006412">
    <property type="term" value="P:translation"/>
    <property type="evidence" value="ECO:0007669"/>
    <property type="project" value="UniProtKB-UniRule"/>
</dbReference>
<dbReference type="FunFam" id="1.10.287.3980:FF:000001">
    <property type="entry name" value="Mitochondrial ribosomal protein L34"/>
    <property type="match status" value="1"/>
</dbReference>
<dbReference type="Gene3D" id="1.10.287.3980">
    <property type="match status" value="1"/>
</dbReference>
<dbReference type="HAMAP" id="MF_00391">
    <property type="entry name" value="Ribosomal_bL34"/>
    <property type="match status" value="1"/>
</dbReference>
<dbReference type="InterPro" id="IPR000271">
    <property type="entry name" value="Ribosomal_bL34"/>
</dbReference>
<dbReference type="InterPro" id="IPR020939">
    <property type="entry name" value="Ribosomal_bL34_CS"/>
</dbReference>
<dbReference type="NCBIfam" id="TIGR01030">
    <property type="entry name" value="rpmH_bact"/>
    <property type="match status" value="1"/>
</dbReference>
<dbReference type="PANTHER" id="PTHR14503:SF4">
    <property type="entry name" value="LARGE RIBOSOMAL SUBUNIT PROTEIN BL34M"/>
    <property type="match status" value="1"/>
</dbReference>
<dbReference type="PANTHER" id="PTHR14503">
    <property type="entry name" value="MITOCHONDRIAL RIBOSOMAL PROTEIN 34 FAMILY MEMBER"/>
    <property type="match status" value="1"/>
</dbReference>
<dbReference type="Pfam" id="PF00468">
    <property type="entry name" value="Ribosomal_L34"/>
    <property type="match status" value="1"/>
</dbReference>
<dbReference type="PROSITE" id="PS00784">
    <property type="entry name" value="RIBOSOMAL_L34"/>
    <property type="match status" value="1"/>
</dbReference>
<reference key="1">
    <citation type="submission" date="2006-10" db="EMBL/GenBank/DDBJ databases">
        <title>Complete sequence of chromosome of Pelobacter propionicus DSM 2379.</title>
        <authorList>
            <consortium name="US DOE Joint Genome Institute"/>
            <person name="Copeland A."/>
            <person name="Lucas S."/>
            <person name="Lapidus A."/>
            <person name="Barry K."/>
            <person name="Detter J.C."/>
            <person name="Glavina del Rio T."/>
            <person name="Hammon N."/>
            <person name="Israni S."/>
            <person name="Dalin E."/>
            <person name="Tice H."/>
            <person name="Pitluck S."/>
            <person name="Saunders E."/>
            <person name="Brettin T."/>
            <person name="Bruce D."/>
            <person name="Han C."/>
            <person name="Tapia R."/>
            <person name="Schmutz J."/>
            <person name="Larimer F."/>
            <person name="Land M."/>
            <person name="Hauser L."/>
            <person name="Kyrpides N."/>
            <person name="Kim E."/>
            <person name="Lovley D."/>
            <person name="Richardson P."/>
        </authorList>
    </citation>
    <scope>NUCLEOTIDE SEQUENCE [LARGE SCALE GENOMIC DNA]</scope>
    <source>
        <strain>DSM 2379 / NBRC 103807 / OttBd1</strain>
    </source>
</reference>
<comment type="similarity">
    <text evidence="1">Belongs to the bacterial ribosomal protein bL34 family.</text>
</comment>
<gene>
    <name evidence="1" type="primary">rpmH</name>
    <name type="ordered locus">Ppro_3626</name>
</gene>